<proteinExistence type="inferred from homology"/>
<dbReference type="EC" id="3.4.24.-"/>
<dbReference type="EMBL" id="DQ643392">
    <property type="protein sequence ID" value="ABF82125.1"/>
    <property type="molecule type" value="Genomic_DNA"/>
</dbReference>
<dbReference type="RefSeq" id="YP_654667.1">
    <property type="nucleotide sequence ID" value="NC_008187.1"/>
</dbReference>
<dbReference type="SMR" id="Q196W5"/>
<dbReference type="SwissPalm" id="Q196W5"/>
<dbReference type="KEGG" id="vg:4156239"/>
<dbReference type="OrthoDB" id="15321at10239"/>
<dbReference type="Proteomes" id="UP000001358">
    <property type="component" value="Genome"/>
</dbReference>
<dbReference type="GO" id="GO:0005576">
    <property type="term" value="C:extracellular region"/>
    <property type="evidence" value="ECO:0007669"/>
    <property type="project" value="UniProtKB-SubCell"/>
</dbReference>
<dbReference type="GO" id="GO:0004222">
    <property type="term" value="F:metalloendopeptidase activity"/>
    <property type="evidence" value="ECO:0007669"/>
    <property type="project" value="InterPro"/>
</dbReference>
<dbReference type="GO" id="GO:0008270">
    <property type="term" value="F:zinc ion binding"/>
    <property type="evidence" value="ECO:0007669"/>
    <property type="project" value="InterPro"/>
</dbReference>
<dbReference type="GO" id="GO:0030574">
    <property type="term" value="P:collagen catabolic process"/>
    <property type="evidence" value="ECO:0007669"/>
    <property type="project" value="TreeGrafter"/>
</dbReference>
<dbReference type="GO" id="GO:0030198">
    <property type="term" value="P:extracellular matrix organization"/>
    <property type="evidence" value="ECO:0007669"/>
    <property type="project" value="TreeGrafter"/>
</dbReference>
<dbReference type="GO" id="GO:0006508">
    <property type="term" value="P:proteolysis"/>
    <property type="evidence" value="ECO:0007669"/>
    <property type="project" value="UniProtKB-KW"/>
</dbReference>
<dbReference type="CDD" id="cd04278">
    <property type="entry name" value="ZnMc_MMP"/>
    <property type="match status" value="1"/>
</dbReference>
<dbReference type="Gene3D" id="3.40.390.10">
    <property type="entry name" value="Collagenase (Catalytic Domain)"/>
    <property type="match status" value="1"/>
</dbReference>
<dbReference type="InterPro" id="IPR033739">
    <property type="entry name" value="M10A_MMP"/>
</dbReference>
<dbReference type="InterPro" id="IPR024079">
    <property type="entry name" value="MetalloPept_cat_dom_sf"/>
</dbReference>
<dbReference type="InterPro" id="IPR001818">
    <property type="entry name" value="Pept_M10_metallopeptidase"/>
</dbReference>
<dbReference type="InterPro" id="IPR021190">
    <property type="entry name" value="Pept_M10A"/>
</dbReference>
<dbReference type="InterPro" id="IPR021158">
    <property type="entry name" value="Pept_M10A_Zn_BS"/>
</dbReference>
<dbReference type="InterPro" id="IPR006026">
    <property type="entry name" value="Peptidase_Metallo"/>
</dbReference>
<dbReference type="InterPro" id="IPR036365">
    <property type="entry name" value="PGBD-like_sf"/>
</dbReference>
<dbReference type="PANTHER" id="PTHR10201">
    <property type="entry name" value="MATRIX METALLOPROTEINASE"/>
    <property type="match status" value="1"/>
</dbReference>
<dbReference type="PANTHER" id="PTHR10201:SF323">
    <property type="entry name" value="MATRIX METALLOPROTEINASE-21"/>
    <property type="match status" value="1"/>
</dbReference>
<dbReference type="Pfam" id="PF00413">
    <property type="entry name" value="Peptidase_M10"/>
    <property type="match status" value="1"/>
</dbReference>
<dbReference type="PRINTS" id="PR00138">
    <property type="entry name" value="MATRIXIN"/>
</dbReference>
<dbReference type="SMART" id="SM00235">
    <property type="entry name" value="ZnMc"/>
    <property type="match status" value="1"/>
</dbReference>
<dbReference type="SUPFAM" id="SSF55486">
    <property type="entry name" value="Metalloproteases ('zincins'), catalytic domain"/>
    <property type="match status" value="1"/>
</dbReference>
<dbReference type="SUPFAM" id="SSF47090">
    <property type="entry name" value="PGBD-like"/>
    <property type="match status" value="1"/>
</dbReference>
<dbReference type="PROSITE" id="PS00546">
    <property type="entry name" value="CYSTEINE_SWITCH"/>
    <property type="match status" value="1"/>
</dbReference>
<dbReference type="PROSITE" id="PS00142">
    <property type="entry name" value="ZINC_PROTEASE"/>
    <property type="match status" value="1"/>
</dbReference>
<keyword id="KW-0378">Hydrolase</keyword>
<keyword id="KW-0479">Metal-binding</keyword>
<keyword id="KW-0482">Metalloprotease</keyword>
<keyword id="KW-0645">Protease</keyword>
<keyword id="KW-1185">Reference proteome</keyword>
<keyword id="KW-0964">Secreted</keyword>
<keyword id="KW-0732">Signal</keyword>
<keyword id="KW-0862">Zinc</keyword>
<keyword id="KW-0865">Zymogen</keyword>
<reference key="1">
    <citation type="journal article" date="2006" name="J. Virol.">
        <title>Genome of invertebrate iridescent virus type 3 (mosquito iridescent virus).</title>
        <authorList>
            <person name="Delhon G."/>
            <person name="Tulman E.R."/>
            <person name="Afonso C.L."/>
            <person name="Lu Z."/>
            <person name="Becnel J.J."/>
            <person name="Moser B.A."/>
            <person name="Kutish G.F."/>
            <person name="Rock D.L."/>
        </authorList>
    </citation>
    <scope>NUCLEOTIDE SEQUENCE [LARGE SCALE GENOMIC DNA]</scope>
</reference>
<organismHost>
    <name type="scientific">Aedes vexans</name>
    <name type="common">Inland floodwater mosquito</name>
    <name type="synonym">Culex vexans</name>
    <dbReference type="NCBI Taxonomy" id="7163"/>
</organismHost>
<organismHost>
    <name type="scientific">Culex territans</name>
    <dbReference type="NCBI Taxonomy" id="42431"/>
</organismHost>
<organismHost>
    <name type="scientific">Culiseta annulata</name>
    <dbReference type="NCBI Taxonomy" id="332058"/>
</organismHost>
<organismHost>
    <name type="scientific">Ochlerotatus sollicitans</name>
    <name type="common">eastern saltmarsh mosquito</name>
    <dbReference type="NCBI Taxonomy" id="310513"/>
</organismHost>
<organismHost>
    <name type="scientific">Ochlerotatus taeniorhynchus</name>
    <name type="common">Black salt marsh mosquito</name>
    <name type="synonym">Aedes taeniorhynchus</name>
    <dbReference type="NCBI Taxonomy" id="329105"/>
</organismHost>
<organismHost>
    <name type="scientific">Psorophora ferox</name>
    <dbReference type="NCBI Taxonomy" id="7183"/>
</organismHost>
<feature type="signal peptide" evidence="2">
    <location>
        <begin position="1"/>
        <end position="25"/>
    </location>
</feature>
<feature type="propeptide" id="PRO_0000377512" description="Activation peptide" evidence="1">
    <location>
        <begin position="26"/>
        <end position="126"/>
    </location>
</feature>
<feature type="chain" id="PRO_0000377513" description="Probable matrix metalloproteinase 095L">
    <location>
        <begin position="127"/>
        <end position="363"/>
    </location>
</feature>
<feature type="short sequence motif" description="Cysteine switch" evidence="1">
    <location>
        <begin position="117"/>
        <end position="124"/>
    </location>
</feature>
<feature type="active site" evidence="3">
    <location>
        <position position="276"/>
    </location>
</feature>
<feature type="binding site" description="in inhibited form" evidence="1">
    <location>
        <position position="119"/>
    </location>
    <ligand>
        <name>Zn(2+)</name>
        <dbReference type="ChEBI" id="CHEBI:29105"/>
        <note>catalytic</note>
    </ligand>
</feature>
<feature type="binding site" evidence="3">
    <location>
        <position position="275"/>
    </location>
    <ligand>
        <name>Zn(2+)</name>
        <dbReference type="ChEBI" id="CHEBI:29105"/>
        <note>catalytic</note>
    </ligand>
</feature>
<feature type="binding site" evidence="3">
    <location>
        <position position="279"/>
    </location>
    <ligand>
        <name>Zn(2+)</name>
        <dbReference type="ChEBI" id="CHEBI:29105"/>
        <note>catalytic</note>
    </ligand>
</feature>
<feature type="binding site" evidence="3">
    <location>
        <position position="285"/>
    </location>
    <ligand>
        <name>Zn(2+)</name>
        <dbReference type="ChEBI" id="CHEBI:29105"/>
        <note>catalytic</note>
    </ligand>
</feature>
<protein>
    <recommendedName>
        <fullName>Probable matrix metalloproteinase 095L</fullName>
        <ecNumber>3.4.24.-</ecNumber>
    </recommendedName>
</protein>
<gene>
    <name type="ORF">IIV3-095L</name>
</gene>
<sequence>MSVDSFTSRLAVVMTAVVLVWWAQALPVPSPRRGESDCDAACRKFLLQYGYLDLGEENCTEVDSNRKLCSVDDELVGVPRPLARVDLAAGVSHLQTMAGLEPTGRIDASTARLFTSPRCGVPDVSKYIVAAGRRRRTRRESVIVCTTRWTTTKSNSNETLVKWWLDQSSMQWLNSTLNWVSLTNVLHHSFWKWSKESMLAFQQVSLERDAQIVVRFENGSHGDGWDFDGPGNVLAHAFQPGQSLGGDIHLDAAEPWTIYDIDGHDGNSILHVVLHEIGHALGLEHSRDPTSIMYAWYTPFKYDLGPEDVSAVAGLYGAKPASSVAAWNPKIQKFYWDRHVRNDLLPLLERDLDAEEEDSDEVR</sequence>
<name>095L_IIV3</name>
<evidence type="ECO:0000250" key="1"/>
<evidence type="ECO:0000255" key="2"/>
<evidence type="ECO:0000255" key="3">
    <source>
        <dbReference type="PROSITE-ProRule" id="PRU10095"/>
    </source>
</evidence>
<evidence type="ECO:0000305" key="4"/>
<accession>Q196W5</accession>
<organism>
    <name type="scientific">Invertebrate iridescent virus 3</name>
    <name type="common">IIV-3</name>
    <name type="synonym">Mosquito iridescent virus</name>
    <dbReference type="NCBI Taxonomy" id="345201"/>
    <lineage>
        <taxon>Viruses</taxon>
        <taxon>Varidnaviria</taxon>
        <taxon>Bamfordvirae</taxon>
        <taxon>Nucleocytoviricota</taxon>
        <taxon>Megaviricetes</taxon>
        <taxon>Pimascovirales</taxon>
        <taxon>Iridoviridae</taxon>
        <taxon>Betairidovirinae</taxon>
        <taxon>Chloriridovirus</taxon>
    </lineage>
</organism>
<comment type="function">
    <text>Probable endopeptidase.</text>
</comment>
<comment type="cofactor">
    <cofactor evidence="1">
        <name>Zn(2+)</name>
        <dbReference type="ChEBI" id="CHEBI:29105"/>
    </cofactor>
    <text evidence="1">Binds 1 zinc ion per subunit.</text>
</comment>
<comment type="subcellular location">
    <subcellularLocation>
        <location evidence="4">Secreted</location>
    </subcellularLocation>
</comment>
<comment type="domain">
    <text>The conserved cysteine present in the cysteine-switch motif binds the catalytic zinc ion, thus inhibiting the enzyme. The dissociation of the cysteine from the zinc ion upon the activation-peptide release activates the enzyme.</text>
</comment>
<comment type="similarity">
    <text evidence="4">Belongs to the peptidase M10A family.</text>
</comment>